<comment type="function">
    <text evidence="1">RNA-binding protein implicated in the regulation of several post-transcriptional events. May be involved in pre-mRNA alternative splicing, mRNA translation repression and stability (By similarity).</text>
</comment>
<comment type="subcellular location">
    <subcellularLocation>
        <location evidence="2">Nucleus</location>
    </subcellularLocation>
    <subcellularLocation>
        <location evidence="3">Cytoplasm</location>
    </subcellularLocation>
</comment>
<comment type="similarity">
    <text evidence="5">Belongs to the CELF/BRUNOL family.</text>
</comment>
<keyword id="KW-0963">Cytoplasm</keyword>
<keyword id="KW-0507">mRNA processing</keyword>
<keyword id="KW-0539">Nucleus</keyword>
<keyword id="KW-1185">Reference proteome</keyword>
<keyword id="KW-0677">Repeat</keyword>
<keyword id="KW-0678">Repressor</keyword>
<keyword id="KW-0694">RNA-binding</keyword>
<dbReference type="EMBL" id="BC136076">
    <property type="protein sequence ID" value="AAI36077.1"/>
    <property type="molecule type" value="mRNA"/>
</dbReference>
<dbReference type="RefSeq" id="NP_001096417.1">
    <property type="nucleotide sequence ID" value="NM_001102947.1"/>
</dbReference>
<dbReference type="BMRB" id="A4IIM2"/>
<dbReference type="SMR" id="A4IIM2"/>
<dbReference type="FunCoup" id="A4IIM2">
    <property type="interactions" value="1605"/>
</dbReference>
<dbReference type="STRING" id="8364.ENSXETP00000044215"/>
<dbReference type="PaxDb" id="8364-ENSXETP00000047617"/>
<dbReference type="DNASU" id="100125022"/>
<dbReference type="GeneID" id="100125022"/>
<dbReference type="KEGG" id="xtr:100125022"/>
<dbReference type="AGR" id="Xenbase:XB-GENE-963640"/>
<dbReference type="CTD" id="10659"/>
<dbReference type="Xenbase" id="XB-GENE-963640">
    <property type="gene designation" value="celf2"/>
</dbReference>
<dbReference type="eggNOG" id="KOG0144">
    <property type="taxonomic scope" value="Eukaryota"/>
</dbReference>
<dbReference type="InParanoid" id="A4IIM2"/>
<dbReference type="OrthoDB" id="410044at2759"/>
<dbReference type="Proteomes" id="UP000008143">
    <property type="component" value="Chromosome 3"/>
</dbReference>
<dbReference type="Bgee" id="ENSXETG00000021992">
    <property type="expression patterns" value="Expressed in brain and 7 other cell types or tissues"/>
</dbReference>
<dbReference type="GO" id="GO:0005737">
    <property type="term" value="C:cytoplasm"/>
    <property type="evidence" value="ECO:0007669"/>
    <property type="project" value="UniProtKB-SubCell"/>
</dbReference>
<dbReference type="GO" id="GO:0005634">
    <property type="term" value="C:nucleus"/>
    <property type="evidence" value="ECO:0007669"/>
    <property type="project" value="UniProtKB-SubCell"/>
</dbReference>
<dbReference type="GO" id="GO:1990904">
    <property type="term" value="C:ribonucleoprotein complex"/>
    <property type="evidence" value="ECO:0007669"/>
    <property type="project" value="InterPro"/>
</dbReference>
<dbReference type="GO" id="GO:0003723">
    <property type="term" value="F:RNA binding"/>
    <property type="evidence" value="ECO:0007669"/>
    <property type="project" value="UniProtKB-KW"/>
</dbReference>
<dbReference type="GO" id="GO:0006397">
    <property type="term" value="P:mRNA processing"/>
    <property type="evidence" value="ECO:0007669"/>
    <property type="project" value="UniProtKB-KW"/>
</dbReference>
<dbReference type="CDD" id="cd12631">
    <property type="entry name" value="RRM1_CELF1_2_Bruno"/>
    <property type="match status" value="1"/>
</dbReference>
<dbReference type="CDD" id="cd12634">
    <property type="entry name" value="RRM2_CELF1_2"/>
    <property type="match status" value="1"/>
</dbReference>
<dbReference type="CDD" id="cd12638">
    <property type="entry name" value="RRM3_CELF1_2"/>
    <property type="match status" value="1"/>
</dbReference>
<dbReference type="FunFam" id="3.30.70.330:FF:000013">
    <property type="entry name" value="CUGBP Elav-like family member 1 isoform 2"/>
    <property type="match status" value="1"/>
</dbReference>
<dbReference type="FunFam" id="3.30.70.330:FF:000015">
    <property type="entry name" value="CUGBP Elav-like family member 1 isoform 2"/>
    <property type="match status" value="1"/>
</dbReference>
<dbReference type="FunFam" id="3.30.70.330:FF:000016">
    <property type="entry name" value="CUGBP Elav-like family member 1 isoform 2"/>
    <property type="match status" value="1"/>
</dbReference>
<dbReference type="Gene3D" id="3.30.70.330">
    <property type="match status" value="3"/>
</dbReference>
<dbReference type="InterPro" id="IPR034196">
    <property type="entry name" value="CELF1/2_RRM1"/>
</dbReference>
<dbReference type="InterPro" id="IPR034198">
    <property type="entry name" value="CELF1/2_RRM2"/>
</dbReference>
<dbReference type="InterPro" id="IPR034199">
    <property type="entry name" value="CELF1/2_RRM3"/>
</dbReference>
<dbReference type="InterPro" id="IPR002343">
    <property type="entry name" value="Hud_Sxl_RNA"/>
</dbReference>
<dbReference type="InterPro" id="IPR012677">
    <property type="entry name" value="Nucleotide-bd_a/b_plait_sf"/>
</dbReference>
<dbReference type="InterPro" id="IPR035979">
    <property type="entry name" value="RBD_domain_sf"/>
</dbReference>
<dbReference type="InterPro" id="IPR000504">
    <property type="entry name" value="RRM_dom"/>
</dbReference>
<dbReference type="PANTHER" id="PTHR24012">
    <property type="entry name" value="RNA BINDING PROTEIN"/>
    <property type="match status" value="1"/>
</dbReference>
<dbReference type="Pfam" id="PF00076">
    <property type="entry name" value="RRM_1"/>
    <property type="match status" value="3"/>
</dbReference>
<dbReference type="PRINTS" id="PR00961">
    <property type="entry name" value="HUDSXLRNA"/>
</dbReference>
<dbReference type="SMART" id="SM00360">
    <property type="entry name" value="RRM"/>
    <property type="match status" value="3"/>
</dbReference>
<dbReference type="SUPFAM" id="SSF54928">
    <property type="entry name" value="RNA-binding domain, RBD"/>
    <property type="match status" value="2"/>
</dbReference>
<dbReference type="PROSITE" id="PS50102">
    <property type="entry name" value="RRM"/>
    <property type="match status" value="3"/>
</dbReference>
<feature type="chain" id="PRO_0000295196" description="CUGBP Elav-like family member 2">
    <location>
        <begin position="1"/>
        <end position="513"/>
    </location>
</feature>
<feature type="domain" description="RRM 1" evidence="4">
    <location>
        <begin position="35"/>
        <end position="118"/>
    </location>
</feature>
<feature type="domain" description="RRM 2" evidence="4">
    <location>
        <begin position="127"/>
        <end position="207"/>
    </location>
</feature>
<feature type="domain" description="RRM 3" evidence="4">
    <location>
        <begin position="428"/>
        <end position="506"/>
    </location>
</feature>
<reference key="1">
    <citation type="submission" date="2007-03" db="EMBL/GenBank/DDBJ databases">
        <authorList>
            <consortium name="NIH - Xenopus Gene Collection (XGC) project"/>
        </authorList>
    </citation>
    <scope>NUCLEOTIDE SEQUENCE [LARGE SCALE MRNA]</scope>
    <source>
        <tissue>Brain</tissue>
    </source>
</reference>
<name>CELF2_XENTR</name>
<protein>
    <recommendedName>
        <fullName>CUGBP Elav-like family member 2</fullName>
        <shortName>CELF-2</shortName>
    </recommendedName>
    <alternativeName>
        <fullName>Bruno-like protein 3</fullName>
    </alternativeName>
    <alternativeName>
        <fullName>CUG triplet repeat RNA-binding protein 2</fullName>
        <shortName>CUG-BP2</shortName>
    </alternativeName>
    <alternativeName>
        <fullName>CUG-BP- and ETR-3-like factor 2</fullName>
    </alternativeName>
    <alternativeName>
        <fullName>ELAV-type RNA-binding protein 3</fullName>
        <shortName>ETR-3</shortName>
    </alternativeName>
    <alternativeName>
        <fullName>RNA-binding protein BRUNOL-3</fullName>
    </alternativeName>
</protein>
<evidence type="ECO:0000250" key="1"/>
<evidence type="ECO:0000250" key="2">
    <source>
        <dbReference type="UniProtKB" id="O95319"/>
    </source>
</evidence>
<evidence type="ECO:0000250" key="3">
    <source>
        <dbReference type="UniProtKB" id="Q7T2T1"/>
    </source>
</evidence>
<evidence type="ECO:0000255" key="4">
    <source>
        <dbReference type="PROSITE-ProRule" id="PRU00176"/>
    </source>
</evidence>
<evidence type="ECO:0000305" key="5"/>
<accession>A4IIM2</accession>
<proteinExistence type="evidence at transcript level"/>
<organism>
    <name type="scientific">Xenopus tropicalis</name>
    <name type="common">Western clawed frog</name>
    <name type="synonym">Silurana tropicalis</name>
    <dbReference type="NCBI Taxonomy" id="8364"/>
    <lineage>
        <taxon>Eukaryota</taxon>
        <taxon>Metazoa</taxon>
        <taxon>Chordata</taxon>
        <taxon>Craniata</taxon>
        <taxon>Vertebrata</taxon>
        <taxon>Euteleostomi</taxon>
        <taxon>Amphibia</taxon>
        <taxon>Batrachia</taxon>
        <taxon>Anura</taxon>
        <taxon>Pipoidea</taxon>
        <taxon>Pipidae</taxon>
        <taxon>Xenopodinae</taxon>
        <taxon>Xenopus</taxon>
        <taxon>Silurana</taxon>
    </lineage>
</organism>
<gene>
    <name type="primary">celf2</name>
    <name type="synonym">brunol3</name>
    <name type="synonym">cugbp2</name>
    <name type="synonym">etr3</name>
</gene>
<sequence>MMVDSRLLVSDRINGTTNKMNGALDHSDQPDPDAIKMFVGQIPRSWSEKELKDLFEPYGAVYQINVLRDRSQNPPQSKGCCFVTFYTRKAALEAQNALHNIKTLPGMHHPIQMKPADSEKSNAVEDRKLFIGMVSKKCNENDIRVMFSPFGQIEECRILRGPDGLSRGCAFVTFSTRAMAQNAIKAMHQSQTMEGCSSPIVVKFADTQKDKEQRRLQQQLAQQMQQLNTATWGNLTGLGALTPQYLALLQQATSSSNLGAFSGIQQMAGMNALQLQNLATLAAAAAAAQTSATTTNANPLSTTTSALGALTSPVAASTANSSAGAAMNSLTSLGTLQGLAGATVGLNNINALAGTVNIAQMLSGMAALNGGLGATGLTNGTAGTMDALTQAYSGIQQYAAAALPTLYSQSLLQQQSAAGSQKEGPEGANLFIYHLPQEFGDQDILQMFMPFGNVISAKVFIDKQTNLSKCFGFVSYDNPVSAQAAIQAMNGFQIGMKRLKVQLKRSKNDSKPY</sequence>